<dbReference type="SMR" id="P86754"/>
<dbReference type="iPTMnet" id="P86754"/>
<dbReference type="GO" id="GO:0005737">
    <property type="term" value="C:cytoplasm"/>
    <property type="evidence" value="ECO:0007669"/>
    <property type="project" value="TreeGrafter"/>
</dbReference>
<dbReference type="GO" id="GO:0005509">
    <property type="term" value="F:calcium ion binding"/>
    <property type="evidence" value="ECO:0007669"/>
    <property type="project" value="InterPro"/>
</dbReference>
<dbReference type="Gene3D" id="1.10.238.10">
    <property type="entry name" value="EF-hand"/>
    <property type="match status" value="1"/>
</dbReference>
<dbReference type="InterPro" id="IPR011992">
    <property type="entry name" value="EF-hand-dom_pair"/>
</dbReference>
<dbReference type="InterPro" id="IPR018247">
    <property type="entry name" value="EF_Hand_1_Ca_BS"/>
</dbReference>
<dbReference type="InterPro" id="IPR002048">
    <property type="entry name" value="EF_hand_dom"/>
</dbReference>
<dbReference type="InterPro" id="IPR008080">
    <property type="entry name" value="Parvalbumin"/>
</dbReference>
<dbReference type="PANTHER" id="PTHR11653:SF12">
    <property type="entry name" value="PARVALBUMIN"/>
    <property type="match status" value="1"/>
</dbReference>
<dbReference type="PANTHER" id="PTHR11653">
    <property type="entry name" value="PARVALBUMIN ALPHA"/>
    <property type="match status" value="1"/>
</dbReference>
<dbReference type="Pfam" id="PF13499">
    <property type="entry name" value="EF-hand_7"/>
    <property type="match status" value="1"/>
</dbReference>
<dbReference type="PRINTS" id="PR01697">
    <property type="entry name" value="PARVALBUMIN"/>
</dbReference>
<dbReference type="SUPFAM" id="SSF47473">
    <property type="entry name" value="EF-hand"/>
    <property type="match status" value="1"/>
</dbReference>
<dbReference type="PROSITE" id="PS00018">
    <property type="entry name" value="EF_HAND_1"/>
    <property type="match status" value="2"/>
</dbReference>
<dbReference type="PROSITE" id="PS50222">
    <property type="entry name" value="EF_HAND_2"/>
    <property type="match status" value="2"/>
</dbReference>
<organism>
    <name type="scientific">Merluccius bilinearis</name>
    <name type="common">Silver hake</name>
    <dbReference type="NCBI Taxonomy" id="79698"/>
    <lineage>
        <taxon>Eukaryota</taxon>
        <taxon>Metazoa</taxon>
        <taxon>Chordata</taxon>
        <taxon>Craniata</taxon>
        <taxon>Vertebrata</taxon>
        <taxon>Euteleostomi</taxon>
        <taxon>Actinopterygii</taxon>
        <taxon>Neopterygii</taxon>
        <taxon>Teleostei</taxon>
        <taxon>Neoteleostei</taxon>
        <taxon>Acanthomorphata</taxon>
        <taxon>Zeiogadaria</taxon>
        <taxon>Gadariae</taxon>
        <taxon>Gadiformes</taxon>
        <taxon>Gadoidei</taxon>
        <taxon>Merlucciidae</taxon>
        <taxon>Merluccius</taxon>
    </lineage>
</organism>
<proteinExistence type="evidence at protein level"/>
<accession>P86754</accession>
<feature type="chain" id="PRO_0000399414" description="Parvalbumin beta 4">
    <location>
        <begin position="1"/>
        <end position="94" status="greater than"/>
    </location>
</feature>
<feature type="domain" description="EF-hand 1" evidence="5">
    <location>
        <begin position="36"/>
        <end position="63"/>
    </location>
</feature>
<feature type="domain" description="EF-hand 2" evidence="5">
    <location>
        <begin position="67"/>
        <end position="94"/>
    </location>
</feature>
<feature type="binding site" evidence="1 5">
    <location>
        <position position="41"/>
    </location>
    <ligand>
        <name>Ca(2+)</name>
        <dbReference type="ChEBI" id="CHEBI:29108"/>
        <label>1</label>
    </ligand>
</feature>
<feature type="binding site" evidence="1 5">
    <location>
        <position position="43"/>
    </location>
    <ligand>
        <name>Ca(2+)</name>
        <dbReference type="ChEBI" id="CHEBI:29108"/>
        <label>1</label>
    </ligand>
</feature>
<feature type="binding site" evidence="1 5">
    <location>
        <position position="45"/>
    </location>
    <ligand>
        <name>Ca(2+)</name>
        <dbReference type="ChEBI" id="CHEBI:29108"/>
        <label>1</label>
    </ligand>
</feature>
<feature type="binding site" evidence="1">
    <location>
        <position position="47"/>
    </location>
    <ligand>
        <name>Ca(2+)</name>
        <dbReference type="ChEBI" id="CHEBI:29108"/>
        <label>1</label>
    </ligand>
</feature>
<feature type="binding site" evidence="1">
    <location>
        <position position="49"/>
    </location>
    <ligand>
        <name>Ca(2+)</name>
        <dbReference type="ChEBI" id="CHEBI:29108"/>
        <label>1</label>
    </ligand>
</feature>
<feature type="binding site" evidence="1 5">
    <location>
        <position position="52"/>
    </location>
    <ligand>
        <name>Ca(2+)</name>
        <dbReference type="ChEBI" id="CHEBI:29108"/>
        <label>1</label>
    </ligand>
</feature>
<feature type="binding site" evidence="1 5">
    <location>
        <position position="80"/>
    </location>
    <ligand>
        <name>Ca(2+)</name>
        <dbReference type="ChEBI" id="CHEBI:29108"/>
        <label>2</label>
    </ligand>
</feature>
<feature type="binding site" evidence="1 5">
    <location>
        <position position="82"/>
    </location>
    <ligand>
        <name>Ca(2+)</name>
        <dbReference type="ChEBI" id="CHEBI:29108"/>
        <label>2</label>
    </ligand>
</feature>
<feature type="binding site" evidence="1 5">
    <location>
        <position position="84"/>
    </location>
    <ligand>
        <name>Ca(2+)</name>
        <dbReference type="ChEBI" id="CHEBI:29108"/>
        <label>2</label>
    </ligand>
</feature>
<feature type="binding site" evidence="5">
    <location>
        <position position="86"/>
    </location>
    <ligand>
        <name>Ca(2+)</name>
        <dbReference type="ChEBI" id="CHEBI:29108"/>
        <label>2</label>
    </ligand>
</feature>
<feature type="binding site" evidence="1 5">
    <location>
        <position position="91"/>
    </location>
    <ligand>
        <name>Ca(2+)</name>
        <dbReference type="ChEBI" id="CHEBI:29108"/>
        <label>2</label>
    </ligand>
</feature>
<feature type="modified residue" description="N-acetylalanine" evidence="6">
    <location>
        <position position="1"/>
    </location>
</feature>
<feature type="unsure residue" description="L or I" evidence="6">
    <location>
        <position position="6"/>
    </location>
</feature>
<feature type="unsure residue" description="I or L" evidence="6">
    <location>
        <position position="11"/>
    </location>
</feature>
<feature type="unsure residue" description="K or Q" evidence="6">
    <location>
        <position position="12"/>
    </location>
</feature>
<feature type="unsure residue" description="L or I" evidence="6">
    <location>
        <position position="15"/>
    </location>
</feature>
<feature type="unsure residue" description="K or Q" evidence="6">
    <location>
        <position position="27"/>
    </location>
</feature>
<feature type="unsure residue" description="K or Q" evidence="6">
    <location>
        <position position="31"/>
    </location>
</feature>
<feature type="unsure residue" description="L or I" evidence="6">
    <location>
        <position position="35"/>
    </location>
</feature>
<feature type="unsure residue" description="I or L" evidence="6">
    <location>
        <position position="39"/>
    </location>
</feature>
<feature type="unsure residue" description="I or L" evidence="6">
    <location>
        <position position="40"/>
    </location>
</feature>
<feature type="unsure residue" description="Q or K" evidence="6">
    <location>
        <position position="42"/>
    </location>
</feature>
<feature type="unsure residue" description="I or L" evidence="6">
    <location>
        <position position="48"/>
    </location>
</feature>
<feature type="unsure residue" description="L or I" evidence="6">
    <location>
        <position position="53"/>
    </location>
</feature>
<feature type="unsure residue" description="K or Q" evidence="6">
    <location>
        <position position="54"/>
    </location>
</feature>
<feature type="unsure residue" description="L or I" evidence="6">
    <location>
        <position position="55"/>
    </location>
</feature>
<feature type="unsure residue" description="L or I" evidence="6">
    <location>
        <position position="57"/>
    </location>
</feature>
<feature type="unsure residue" description="Q or K" evidence="6">
    <location>
        <position position="58"/>
    </location>
</feature>
<feature type="unsure residue" description="L or I" evidence="6">
    <location>
        <position position="67"/>
    </location>
</feature>
<feature type="unsure residue" description="K or Q" evidence="6">
    <location>
        <position position="73"/>
    </location>
</feature>
<feature type="unsure residue" description="L or I" evidence="6">
    <location>
        <position position="76"/>
    </location>
</feature>
<feature type="unsure residue" description="I or L" evidence="6">
    <location>
        <position position="87"/>
    </location>
</feature>
<feature type="non-consecutive residues" evidence="7">
    <location>
        <begin position="35"/>
        <end position="36"/>
    </location>
</feature>
<feature type="non-terminal residue" evidence="7">
    <location>
        <position position="94"/>
    </location>
</feature>
<reference evidence="8" key="1">
    <citation type="journal article" date="2010" name="J. Proteome Res.">
        <title>Extensive de novo sequencing of new parvalbumin isoforms using a novel combination of bottom-up proteomics, accurate molecular mass measurement by FTICR-MS, and selected MS/MS ion monitoring.</title>
        <authorList>
            <person name="Carrera M."/>
            <person name="Canas B."/>
            <person name="Vazquez J."/>
            <person name="Gallardo J.M."/>
        </authorList>
    </citation>
    <scope>PROTEIN SEQUENCE</scope>
    <scope>ACETYLATION AT ALA-1</scope>
    <source>
        <tissue evidence="6">Muscle</tissue>
    </source>
</reference>
<sequence>AFAGVLADADIKAALAGCAAADSFNYKTFFKACGLFFAIIDQDHSGFIEEEELKLFLQTFSAGARALSDAETKTFLAAGDVDGDGMIGVDEFAA</sequence>
<evidence type="ECO:0000250" key="1">
    <source>
        <dbReference type="UniProtKB" id="P02621"/>
    </source>
</evidence>
<evidence type="ECO:0000250" key="2">
    <source>
        <dbReference type="UniProtKB" id="P02622"/>
    </source>
</evidence>
<evidence type="ECO:0000250" key="3">
    <source>
        <dbReference type="UniProtKB" id="P02624"/>
    </source>
</evidence>
<evidence type="ECO:0000255" key="4"/>
<evidence type="ECO:0000255" key="5">
    <source>
        <dbReference type="PROSITE-ProRule" id="PRU00448"/>
    </source>
</evidence>
<evidence type="ECO:0000269" key="6">
    <source>
    </source>
</evidence>
<evidence type="ECO:0000303" key="7">
    <source>
    </source>
</evidence>
<evidence type="ECO:0000305" key="8"/>
<protein>
    <recommendedName>
        <fullName evidence="7">Parvalbumin beta 4</fullName>
    </recommendedName>
</protein>
<keyword id="KW-0007">Acetylation</keyword>
<keyword id="KW-0020">Allergen</keyword>
<keyword id="KW-0106">Calcium</keyword>
<keyword id="KW-0903">Direct protein sequencing</keyword>
<keyword id="KW-0479">Metal-binding</keyword>
<keyword id="KW-0514">Muscle protein</keyword>
<keyword id="KW-0677">Repeat</keyword>
<comment type="function">
    <text evidence="2 3">In muscle, parvalbumin is thought to be involved in relaxation after contraction. It binds two calcium ions (By similarity).</text>
</comment>
<comment type="miscellaneous">
    <text evidence="2 6">Is regarded as an important allergen.</text>
</comment>
<comment type="miscellaneous">
    <text evidence="6">On the 2D-gel the determined pI of this protein is: 3.98, its MW is: 11.27 kDa.</text>
</comment>
<comment type="similarity">
    <text evidence="4">Belongs to the parvalbumin family.</text>
</comment>
<name>PRVB4_MERBI</name>